<keyword id="KW-1185">Reference proteome</keyword>
<keyword id="KW-0687">Ribonucleoprotein</keyword>
<keyword id="KW-0689">Ribosomal protein</keyword>
<keyword id="KW-0694">RNA-binding</keyword>
<keyword id="KW-0699">rRNA-binding</keyword>
<protein>
    <recommendedName>
        <fullName evidence="1">Large ribosomal subunit protein uL6</fullName>
    </recommendedName>
    <alternativeName>
        <fullName evidence="2">50S ribosomal protein L6</fullName>
    </alternativeName>
</protein>
<name>RL6_POLNA</name>
<reference key="1">
    <citation type="journal article" date="2009" name="Environ. Microbiol.">
        <title>The genome of Polaromonas naphthalenivorans strain CJ2, isolated from coal tar-contaminated sediment, reveals physiological and metabolic versatility and evolution through extensive horizontal gene transfer.</title>
        <authorList>
            <person name="Yagi J.M."/>
            <person name="Sims D."/>
            <person name="Brettin T."/>
            <person name="Bruce D."/>
            <person name="Madsen E.L."/>
        </authorList>
    </citation>
    <scope>NUCLEOTIDE SEQUENCE [LARGE SCALE GENOMIC DNA]</scope>
    <source>
        <strain>CJ2</strain>
    </source>
</reference>
<gene>
    <name evidence="1" type="primary">rplF</name>
    <name type="ordered locus">Pnap_0335</name>
</gene>
<accession>A1VJ30</accession>
<sequence>MSRVAKMPVAIPEGVEIAIKDTQINVKGALGALALAQNAHVVIASNDGKLTFVPANDSRQANAMSGTMRQLVNNMVVGVTKGFQKKLNLVGVGFKAQAQGDKLNLTVGYSHPVVMAMPAGITVATPTPTEVVIKGSDRQRVGQIAAEVRAVRPPEPYKGKGIRYSDEKITIKETKKK</sequence>
<feature type="chain" id="PRO_1000055282" description="Large ribosomal subunit protein uL6">
    <location>
        <begin position="1"/>
        <end position="177"/>
    </location>
</feature>
<evidence type="ECO:0000255" key="1">
    <source>
        <dbReference type="HAMAP-Rule" id="MF_01365"/>
    </source>
</evidence>
<evidence type="ECO:0000305" key="2"/>
<dbReference type="EMBL" id="CP000529">
    <property type="protein sequence ID" value="ABM35658.1"/>
    <property type="molecule type" value="Genomic_DNA"/>
</dbReference>
<dbReference type="RefSeq" id="WP_011799764.1">
    <property type="nucleotide sequence ID" value="NC_008781.1"/>
</dbReference>
<dbReference type="SMR" id="A1VJ30"/>
<dbReference type="STRING" id="365044.Pnap_0335"/>
<dbReference type="KEGG" id="pna:Pnap_0335"/>
<dbReference type="eggNOG" id="COG0097">
    <property type="taxonomic scope" value="Bacteria"/>
</dbReference>
<dbReference type="HOGENOM" id="CLU_065464_1_2_4"/>
<dbReference type="OrthoDB" id="9805007at2"/>
<dbReference type="Proteomes" id="UP000000644">
    <property type="component" value="Chromosome"/>
</dbReference>
<dbReference type="GO" id="GO:0022625">
    <property type="term" value="C:cytosolic large ribosomal subunit"/>
    <property type="evidence" value="ECO:0007669"/>
    <property type="project" value="TreeGrafter"/>
</dbReference>
<dbReference type="GO" id="GO:0019843">
    <property type="term" value="F:rRNA binding"/>
    <property type="evidence" value="ECO:0007669"/>
    <property type="project" value="UniProtKB-UniRule"/>
</dbReference>
<dbReference type="GO" id="GO:0003735">
    <property type="term" value="F:structural constituent of ribosome"/>
    <property type="evidence" value="ECO:0007669"/>
    <property type="project" value="InterPro"/>
</dbReference>
<dbReference type="GO" id="GO:0002181">
    <property type="term" value="P:cytoplasmic translation"/>
    <property type="evidence" value="ECO:0007669"/>
    <property type="project" value="TreeGrafter"/>
</dbReference>
<dbReference type="FunFam" id="3.90.930.12:FF:000001">
    <property type="entry name" value="50S ribosomal protein L6"/>
    <property type="match status" value="1"/>
</dbReference>
<dbReference type="FunFam" id="3.90.930.12:FF:000002">
    <property type="entry name" value="50S ribosomal protein L6"/>
    <property type="match status" value="1"/>
</dbReference>
<dbReference type="Gene3D" id="3.90.930.12">
    <property type="entry name" value="Ribosomal protein L6, alpha-beta domain"/>
    <property type="match status" value="2"/>
</dbReference>
<dbReference type="HAMAP" id="MF_01365_B">
    <property type="entry name" value="Ribosomal_uL6_B"/>
    <property type="match status" value="1"/>
</dbReference>
<dbReference type="InterPro" id="IPR000702">
    <property type="entry name" value="Ribosomal_uL6-like"/>
</dbReference>
<dbReference type="InterPro" id="IPR036789">
    <property type="entry name" value="Ribosomal_uL6-like_a/b-dom_sf"/>
</dbReference>
<dbReference type="InterPro" id="IPR020040">
    <property type="entry name" value="Ribosomal_uL6_a/b-dom"/>
</dbReference>
<dbReference type="InterPro" id="IPR019906">
    <property type="entry name" value="Ribosomal_uL6_bac-type"/>
</dbReference>
<dbReference type="InterPro" id="IPR002358">
    <property type="entry name" value="Ribosomal_uL6_CS"/>
</dbReference>
<dbReference type="NCBIfam" id="TIGR03654">
    <property type="entry name" value="L6_bact"/>
    <property type="match status" value="1"/>
</dbReference>
<dbReference type="PANTHER" id="PTHR11655">
    <property type="entry name" value="60S/50S RIBOSOMAL PROTEIN L6/L9"/>
    <property type="match status" value="1"/>
</dbReference>
<dbReference type="PANTHER" id="PTHR11655:SF14">
    <property type="entry name" value="LARGE RIBOSOMAL SUBUNIT PROTEIN UL6M"/>
    <property type="match status" value="1"/>
</dbReference>
<dbReference type="Pfam" id="PF00347">
    <property type="entry name" value="Ribosomal_L6"/>
    <property type="match status" value="2"/>
</dbReference>
<dbReference type="PIRSF" id="PIRSF002162">
    <property type="entry name" value="Ribosomal_L6"/>
    <property type="match status" value="1"/>
</dbReference>
<dbReference type="PRINTS" id="PR00059">
    <property type="entry name" value="RIBOSOMALL6"/>
</dbReference>
<dbReference type="SUPFAM" id="SSF56053">
    <property type="entry name" value="Ribosomal protein L6"/>
    <property type="match status" value="2"/>
</dbReference>
<dbReference type="PROSITE" id="PS00525">
    <property type="entry name" value="RIBOSOMAL_L6_1"/>
    <property type="match status" value="1"/>
</dbReference>
<proteinExistence type="inferred from homology"/>
<comment type="function">
    <text evidence="1">This protein binds to the 23S rRNA, and is important in its secondary structure. It is located near the subunit interface in the base of the L7/L12 stalk, and near the tRNA binding site of the peptidyltransferase center.</text>
</comment>
<comment type="subunit">
    <text evidence="1">Part of the 50S ribosomal subunit.</text>
</comment>
<comment type="similarity">
    <text evidence="1">Belongs to the universal ribosomal protein uL6 family.</text>
</comment>
<organism>
    <name type="scientific">Polaromonas naphthalenivorans (strain CJ2)</name>
    <dbReference type="NCBI Taxonomy" id="365044"/>
    <lineage>
        <taxon>Bacteria</taxon>
        <taxon>Pseudomonadati</taxon>
        <taxon>Pseudomonadota</taxon>
        <taxon>Betaproteobacteria</taxon>
        <taxon>Burkholderiales</taxon>
        <taxon>Comamonadaceae</taxon>
        <taxon>Polaromonas</taxon>
    </lineage>
</organism>